<gene>
    <name evidence="1" type="primary">rsmH</name>
    <name type="synonym">mraW</name>
    <name type="ordered locus">CFPG_742</name>
</gene>
<reference key="1">
    <citation type="journal article" date="2008" name="Science">
        <title>Genome of an endosymbiont coupling N2 fixation to cellulolysis within RT protist cells in termite gut.</title>
        <authorList>
            <person name="Hongoh Y."/>
            <person name="Sharma V.K."/>
            <person name="Prakash T."/>
            <person name="Noda S."/>
            <person name="Toh H."/>
            <person name="Taylor T.D."/>
            <person name="Kudo T."/>
            <person name="Sakaki Y."/>
            <person name="Toyoda A."/>
            <person name="Hattori M."/>
            <person name="Ohkuma M."/>
        </authorList>
    </citation>
    <scope>NUCLEOTIDE SEQUENCE [LARGE SCALE GENOMIC DNA]</scope>
</reference>
<organism>
    <name type="scientific">Azobacteroides pseudotrichonymphae genomovar. CFP2</name>
    <dbReference type="NCBI Taxonomy" id="511995"/>
    <lineage>
        <taxon>Bacteria</taxon>
        <taxon>Pseudomonadati</taxon>
        <taxon>Bacteroidota</taxon>
        <taxon>Bacteroidia</taxon>
        <taxon>Bacteroidales</taxon>
        <taxon>Candidatus Azobacteroides</taxon>
    </lineage>
</organism>
<protein>
    <recommendedName>
        <fullName evidence="1">Ribosomal RNA small subunit methyltransferase H</fullName>
        <ecNumber evidence="1">2.1.1.199</ecNumber>
    </recommendedName>
    <alternativeName>
        <fullName evidence="1">16S rRNA m(4)C1402 methyltransferase</fullName>
    </alternativeName>
    <alternativeName>
        <fullName evidence="1">rRNA (cytosine-N(4)-)-methyltransferase RsmH</fullName>
    </alternativeName>
</protein>
<feature type="chain" id="PRO_1000134759" description="Ribosomal RNA small subunit methyltransferase H">
    <location>
        <begin position="1"/>
        <end position="304"/>
    </location>
</feature>
<feature type="binding site" evidence="1">
    <location>
        <begin position="37"/>
        <end position="39"/>
    </location>
    <ligand>
        <name>S-adenosyl-L-methionine</name>
        <dbReference type="ChEBI" id="CHEBI:59789"/>
    </ligand>
</feature>
<feature type="binding site" evidence="1">
    <location>
        <position position="57"/>
    </location>
    <ligand>
        <name>S-adenosyl-L-methionine</name>
        <dbReference type="ChEBI" id="CHEBI:59789"/>
    </ligand>
</feature>
<feature type="binding site" evidence="1">
    <location>
        <position position="85"/>
    </location>
    <ligand>
        <name>S-adenosyl-L-methionine</name>
        <dbReference type="ChEBI" id="CHEBI:59789"/>
    </ligand>
</feature>
<feature type="binding site" evidence="1">
    <location>
        <position position="100"/>
    </location>
    <ligand>
        <name>S-adenosyl-L-methionine</name>
        <dbReference type="ChEBI" id="CHEBI:59789"/>
    </ligand>
</feature>
<feature type="binding site" evidence="1">
    <location>
        <position position="107"/>
    </location>
    <ligand>
        <name>S-adenosyl-L-methionine</name>
        <dbReference type="ChEBI" id="CHEBI:59789"/>
    </ligand>
</feature>
<dbReference type="EC" id="2.1.1.199" evidence="1"/>
<dbReference type="EMBL" id="AP010656">
    <property type="protein sequence ID" value="BAG84005.1"/>
    <property type="molecule type" value="Genomic_DNA"/>
</dbReference>
<dbReference type="RefSeq" id="WP_012573761.1">
    <property type="nucleotide sequence ID" value="NC_011565.1"/>
</dbReference>
<dbReference type="SMR" id="B6YS33"/>
<dbReference type="STRING" id="511995.CFPG_742"/>
<dbReference type="KEGG" id="aps:CFPG_742"/>
<dbReference type="eggNOG" id="COG0275">
    <property type="taxonomic scope" value="Bacteria"/>
</dbReference>
<dbReference type="HOGENOM" id="CLU_038422_2_0_10"/>
<dbReference type="OrthoDB" id="9806637at2"/>
<dbReference type="Proteomes" id="UP000000723">
    <property type="component" value="Chromosome"/>
</dbReference>
<dbReference type="GO" id="GO:0005737">
    <property type="term" value="C:cytoplasm"/>
    <property type="evidence" value="ECO:0007669"/>
    <property type="project" value="UniProtKB-SubCell"/>
</dbReference>
<dbReference type="GO" id="GO:0071424">
    <property type="term" value="F:rRNA (cytosine-N4-)-methyltransferase activity"/>
    <property type="evidence" value="ECO:0007669"/>
    <property type="project" value="UniProtKB-UniRule"/>
</dbReference>
<dbReference type="GO" id="GO:0070475">
    <property type="term" value="P:rRNA base methylation"/>
    <property type="evidence" value="ECO:0007669"/>
    <property type="project" value="UniProtKB-UniRule"/>
</dbReference>
<dbReference type="Gene3D" id="1.10.150.170">
    <property type="entry name" value="Putative methyltransferase TM0872, insert domain"/>
    <property type="match status" value="1"/>
</dbReference>
<dbReference type="Gene3D" id="3.40.50.150">
    <property type="entry name" value="Vaccinia Virus protein VP39"/>
    <property type="match status" value="1"/>
</dbReference>
<dbReference type="HAMAP" id="MF_01007">
    <property type="entry name" value="16SrRNA_methyltr_H"/>
    <property type="match status" value="1"/>
</dbReference>
<dbReference type="InterPro" id="IPR002903">
    <property type="entry name" value="RsmH"/>
</dbReference>
<dbReference type="InterPro" id="IPR023397">
    <property type="entry name" value="SAM-dep_MeTrfase_MraW_recog"/>
</dbReference>
<dbReference type="InterPro" id="IPR029063">
    <property type="entry name" value="SAM-dependent_MTases_sf"/>
</dbReference>
<dbReference type="NCBIfam" id="TIGR00006">
    <property type="entry name" value="16S rRNA (cytosine(1402)-N(4))-methyltransferase RsmH"/>
    <property type="match status" value="1"/>
</dbReference>
<dbReference type="PANTHER" id="PTHR11265:SF0">
    <property type="entry name" value="12S RRNA N4-METHYLCYTIDINE METHYLTRANSFERASE"/>
    <property type="match status" value="1"/>
</dbReference>
<dbReference type="PANTHER" id="PTHR11265">
    <property type="entry name" value="S-ADENOSYL-METHYLTRANSFERASE MRAW"/>
    <property type="match status" value="1"/>
</dbReference>
<dbReference type="Pfam" id="PF01795">
    <property type="entry name" value="Methyltransf_5"/>
    <property type="match status" value="1"/>
</dbReference>
<dbReference type="PIRSF" id="PIRSF004486">
    <property type="entry name" value="MraW"/>
    <property type="match status" value="1"/>
</dbReference>
<dbReference type="SUPFAM" id="SSF81799">
    <property type="entry name" value="Putative methyltransferase TM0872, insert domain"/>
    <property type="match status" value="1"/>
</dbReference>
<dbReference type="SUPFAM" id="SSF53335">
    <property type="entry name" value="S-adenosyl-L-methionine-dependent methyltransferases"/>
    <property type="match status" value="1"/>
</dbReference>
<sequence>MDKTSVYHHIPVLLKESVDGLNVCSGGIYVDVTFGGGGHSKEILVRLGNTGHLYGFDQDEDSEKNIFSDIRFTFVRSNFRYLAHFMDWHNVKEIDGLLADLGVSSIHFDDCNRGFSFRFIGNLDMRMNQRKGETAADILNTYSENKLIDMFDLYGELKNSASIAHAIVQARMQREIQTVQDFLDILKPFVRKGKVEKQLAQIFQALRIEVNKELDALKEMLIQAKQLLRSGGRIAIITYHSLEDRLVKFFFKTGSFYEKIERDFYGNFLSPFKIINHRVIVASDEEVKRNPRSRSAKLRIAEKI</sequence>
<proteinExistence type="inferred from homology"/>
<comment type="function">
    <text evidence="1">Specifically methylates the N4 position of cytidine in position 1402 (C1402) of 16S rRNA.</text>
</comment>
<comment type="catalytic activity">
    <reaction evidence="1">
        <text>cytidine(1402) in 16S rRNA + S-adenosyl-L-methionine = N(4)-methylcytidine(1402) in 16S rRNA + S-adenosyl-L-homocysteine + H(+)</text>
        <dbReference type="Rhea" id="RHEA:42928"/>
        <dbReference type="Rhea" id="RHEA-COMP:10286"/>
        <dbReference type="Rhea" id="RHEA-COMP:10287"/>
        <dbReference type="ChEBI" id="CHEBI:15378"/>
        <dbReference type="ChEBI" id="CHEBI:57856"/>
        <dbReference type="ChEBI" id="CHEBI:59789"/>
        <dbReference type="ChEBI" id="CHEBI:74506"/>
        <dbReference type="ChEBI" id="CHEBI:82748"/>
        <dbReference type="EC" id="2.1.1.199"/>
    </reaction>
</comment>
<comment type="subcellular location">
    <subcellularLocation>
        <location evidence="1">Cytoplasm</location>
    </subcellularLocation>
</comment>
<comment type="similarity">
    <text evidence="1">Belongs to the methyltransferase superfamily. RsmH family.</text>
</comment>
<accession>B6YS33</accession>
<name>RSMH_AZOPC</name>
<keyword id="KW-0963">Cytoplasm</keyword>
<keyword id="KW-0489">Methyltransferase</keyword>
<keyword id="KW-1185">Reference proteome</keyword>
<keyword id="KW-0698">rRNA processing</keyword>
<keyword id="KW-0949">S-adenosyl-L-methionine</keyword>
<keyword id="KW-0808">Transferase</keyword>
<evidence type="ECO:0000255" key="1">
    <source>
        <dbReference type="HAMAP-Rule" id="MF_01007"/>
    </source>
</evidence>